<proteinExistence type="inferred from homology"/>
<accession>Q9AAG0</accession>
<organism>
    <name type="scientific">Caulobacter vibrioides (strain ATCC 19089 / CIP 103742 / CB 15)</name>
    <name type="common">Caulobacter crescentus</name>
    <dbReference type="NCBI Taxonomy" id="190650"/>
    <lineage>
        <taxon>Bacteria</taxon>
        <taxon>Pseudomonadati</taxon>
        <taxon>Pseudomonadota</taxon>
        <taxon>Alphaproteobacteria</taxon>
        <taxon>Caulobacterales</taxon>
        <taxon>Caulobacteraceae</taxon>
        <taxon>Caulobacter</taxon>
    </lineage>
</organism>
<name>RL1_CAUVC</name>
<sequence length="229" mass="23735">MAKQPKRITAWTGDRDAAHSVEAAIALVKANAKAKFDETIEISVNLGVDPRHADQQVRGVVNLPSGTGRDVRVAVFAKDAKAAEATAAGAEHVGADDLYEKIAGGFMDFDRVIATPDMMALVGRLGKVLGPRGLMPNPKVGTVTPNVAQAVKDAKGGAVEFRVEKAGIVHAGIGKASFTDEALAINVKALIEALNRSKPSGAKGVFIKRVGLSSTMGPGFKVDISSIGA</sequence>
<comment type="function">
    <text evidence="1">Binds directly to 23S rRNA. The L1 stalk is quite mobile in the ribosome, and is involved in E site tRNA release.</text>
</comment>
<comment type="function">
    <text evidence="1">Protein L1 is also a translational repressor protein, it controls the translation of the L11 operon by binding to its mRNA.</text>
</comment>
<comment type="subunit">
    <text evidence="1">Part of the 50S ribosomal subunit.</text>
</comment>
<comment type="similarity">
    <text evidence="1">Belongs to the universal ribosomal protein uL1 family.</text>
</comment>
<evidence type="ECO:0000255" key="1">
    <source>
        <dbReference type="HAMAP-Rule" id="MF_01318"/>
    </source>
</evidence>
<evidence type="ECO:0000305" key="2"/>
<feature type="chain" id="PRO_0000125637" description="Large ribosomal subunit protein uL1">
    <location>
        <begin position="1"/>
        <end position="229"/>
    </location>
</feature>
<keyword id="KW-1185">Reference proteome</keyword>
<keyword id="KW-0678">Repressor</keyword>
<keyword id="KW-0687">Ribonucleoprotein</keyword>
<keyword id="KW-0689">Ribosomal protein</keyword>
<keyword id="KW-0694">RNA-binding</keyword>
<keyword id="KW-0699">rRNA-binding</keyword>
<keyword id="KW-0810">Translation regulation</keyword>
<keyword id="KW-0820">tRNA-binding</keyword>
<reference key="1">
    <citation type="journal article" date="2001" name="Proc. Natl. Acad. Sci. U.S.A.">
        <title>Complete genome sequence of Caulobacter crescentus.</title>
        <authorList>
            <person name="Nierman W.C."/>
            <person name="Feldblyum T.V."/>
            <person name="Laub M.T."/>
            <person name="Paulsen I.T."/>
            <person name="Nelson K.E."/>
            <person name="Eisen J.A."/>
            <person name="Heidelberg J.F."/>
            <person name="Alley M.R.K."/>
            <person name="Ohta N."/>
            <person name="Maddock J.R."/>
            <person name="Potocka I."/>
            <person name="Nelson W.C."/>
            <person name="Newton A."/>
            <person name="Stephens C."/>
            <person name="Phadke N.D."/>
            <person name="Ely B."/>
            <person name="DeBoy R.T."/>
            <person name="Dodson R.J."/>
            <person name="Durkin A.S."/>
            <person name="Gwinn M.L."/>
            <person name="Haft D.H."/>
            <person name="Kolonay J.F."/>
            <person name="Smit J."/>
            <person name="Craven M.B."/>
            <person name="Khouri H.M."/>
            <person name="Shetty J."/>
            <person name="Berry K.J."/>
            <person name="Utterback T.R."/>
            <person name="Tran K."/>
            <person name="Wolf A.M."/>
            <person name="Vamathevan J.J."/>
            <person name="Ermolaeva M.D."/>
            <person name="White O."/>
            <person name="Salzberg S.L."/>
            <person name="Venter J.C."/>
            <person name="Shapiro L."/>
            <person name="Fraser C.M."/>
        </authorList>
    </citation>
    <scope>NUCLEOTIDE SEQUENCE [LARGE SCALE GENOMIC DNA]</scope>
    <source>
        <strain>ATCC 19089 / CIP 103742 / CB 15</strain>
    </source>
</reference>
<protein>
    <recommendedName>
        <fullName evidence="1">Large ribosomal subunit protein uL1</fullName>
    </recommendedName>
    <alternativeName>
        <fullName evidence="2">50S ribosomal protein L1</fullName>
    </alternativeName>
</protein>
<gene>
    <name evidence="1" type="primary">rplA</name>
    <name type="ordered locus">CC_0640</name>
</gene>
<dbReference type="EMBL" id="AE005673">
    <property type="protein sequence ID" value="AAK22625.1"/>
    <property type="molecule type" value="Genomic_DNA"/>
</dbReference>
<dbReference type="PIR" id="E87328">
    <property type="entry name" value="E87328"/>
</dbReference>
<dbReference type="RefSeq" id="NP_419457.1">
    <property type="nucleotide sequence ID" value="NC_002696.2"/>
</dbReference>
<dbReference type="RefSeq" id="WP_010918526.1">
    <property type="nucleotide sequence ID" value="NC_002696.2"/>
</dbReference>
<dbReference type="SMR" id="Q9AAG0"/>
<dbReference type="STRING" id="190650.CC_0640"/>
<dbReference type="EnsemblBacteria" id="AAK22625">
    <property type="protein sequence ID" value="AAK22625"/>
    <property type="gene ID" value="CC_0640"/>
</dbReference>
<dbReference type="KEGG" id="ccr:CC_0640"/>
<dbReference type="PATRIC" id="fig|190650.5.peg.651"/>
<dbReference type="eggNOG" id="COG0081">
    <property type="taxonomic scope" value="Bacteria"/>
</dbReference>
<dbReference type="HOGENOM" id="CLU_062853_0_0_5"/>
<dbReference type="BioCyc" id="CAULO:CC0640-MONOMER"/>
<dbReference type="Proteomes" id="UP000001816">
    <property type="component" value="Chromosome"/>
</dbReference>
<dbReference type="GO" id="GO:0022625">
    <property type="term" value="C:cytosolic large ribosomal subunit"/>
    <property type="evidence" value="ECO:0007669"/>
    <property type="project" value="TreeGrafter"/>
</dbReference>
<dbReference type="GO" id="GO:0019843">
    <property type="term" value="F:rRNA binding"/>
    <property type="evidence" value="ECO:0007669"/>
    <property type="project" value="UniProtKB-UniRule"/>
</dbReference>
<dbReference type="GO" id="GO:0003735">
    <property type="term" value="F:structural constituent of ribosome"/>
    <property type="evidence" value="ECO:0007669"/>
    <property type="project" value="InterPro"/>
</dbReference>
<dbReference type="GO" id="GO:0000049">
    <property type="term" value="F:tRNA binding"/>
    <property type="evidence" value="ECO:0007669"/>
    <property type="project" value="UniProtKB-KW"/>
</dbReference>
<dbReference type="GO" id="GO:0006417">
    <property type="term" value="P:regulation of translation"/>
    <property type="evidence" value="ECO:0007669"/>
    <property type="project" value="UniProtKB-KW"/>
</dbReference>
<dbReference type="GO" id="GO:0006412">
    <property type="term" value="P:translation"/>
    <property type="evidence" value="ECO:0007669"/>
    <property type="project" value="UniProtKB-UniRule"/>
</dbReference>
<dbReference type="CDD" id="cd00403">
    <property type="entry name" value="Ribosomal_L1"/>
    <property type="match status" value="1"/>
</dbReference>
<dbReference type="FunFam" id="3.40.50.790:FF:000001">
    <property type="entry name" value="50S ribosomal protein L1"/>
    <property type="match status" value="1"/>
</dbReference>
<dbReference type="Gene3D" id="3.30.190.20">
    <property type="match status" value="1"/>
</dbReference>
<dbReference type="Gene3D" id="3.40.50.790">
    <property type="match status" value="1"/>
</dbReference>
<dbReference type="HAMAP" id="MF_01318_B">
    <property type="entry name" value="Ribosomal_uL1_B"/>
    <property type="match status" value="1"/>
</dbReference>
<dbReference type="InterPro" id="IPR005878">
    <property type="entry name" value="Ribosom_uL1_bac-type"/>
</dbReference>
<dbReference type="InterPro" id="IPR002143">
    <property type="entry name" value="Ribosomal_uL1"/>
</dbReference>
<dbReference type="InterPro" id="IPR023674">
    <property type="entry name" value="Ribosomal_uL1-like"/>
</dbReference>
<dbReference type="InterPro" id="IPR028364">
    <property type="entry name" value="Ribosomal_uL1/biogenesis"/>
</dbReference>
<dbReference type="InterPro" id="IPR016095">
    <property type="entry name" value="Ribosomal_uL1_3-a/b-sand"/>
</dbReference>
<dbReference type="InterPro" id="IPR023673">
    <property type="entry name" value="Ribosomal_uL1_CS"/>
</dbReference>
<dbReference type="NCBIfam" id="TIGR01169">
    <property type="entry name" value="rplA_bact"/>
    <property type="match status" value="1"/>
</dbReference>
<dbReference type="PANTHER" id="PTHR36427">
    <property type="entry name" value="54S RIBOSOMAL PROTEIN L1, MITOCHONDRIAL"/>
    <property type="match status" value="1"/>
</dbReference>
<dbReference type="PANTHER" id="PTHR36427:SF3">
    <property type="entry name" value="LARGE RIBOSOMAL SUBUNIT PROTEIN UL1M"/>
    <property type="match status" value="1"/>
</dbReference>
<dbReference type="Pfam" id="PF00687">
    <property type="entry name" value="Ribosomal_L1"/>
    <property type="match status" value="1"/>
</dbReference>
<dbReference type="PIRSF" id="PIRSF002155">
    <property type="entry name" value="Ribosomal_L1"/>
    <property type="match status" value="1"/>
</dbReference>
<dbReference type="SUPFAM" id="SSF56808">
    <property type="entry name" value="Ribosomal protein L1"/>
    <property type="match status" value="1"/>
</dbReference>
<dbReference type="PROSITE" id="PS01199">
    <property type="entry name" value="RIBOSOMAL_L1"/>
    <property type="match status" value="1"/>
</dbReference>